<evidence type="ECO:0000250" key="1"/>
<evidence type="ECO:0000255" key="2">
    <source>
        <dbReference type="HAMAP-Rule" id="MF_01686"/>
    </source>
</evidence>
<evidence type="ECO:0000305" key="3"/>
<gene>
    <name evidence="2" type="primary">thyA</name>
    <name type="ordered locus">MTH_774</name>
</gene>
<protein>
    <recommendedName>
        <fullName evidence="2">Putative thymidylate synthase</fullName>
        <shortName evidence="2">TS</shortName>
        <shortName evidence="2">TSase</shortName>
        <ecNumber evidence="2">2.1.1.-</ecNumber>
    </recommendedName>
</protein>
<feature type="initiator methionine" description="Removed" evidence="1">
    <location>
        <position position="1"/>
    </location>
</feature>
<feature type="chain" id="PRO_0000141058" description="Putative thymidylate synthase">
    <location>
        <begin position="2"/>
        <end position="222"/>
    </location>
</feature>
<feature type="active site" evidence="2">
    <location>
        <position position="146"/>
    </location>
</feature>
<reference key="1">
    <citation type="journal article" date="1997" name="J. Bacteriol.">
        <title>Complete genome sequence of Methanobacterium thermoautotrophicum deltaH: functional analysis and comparative genomics.</title>
        <authorList>
            <person name="Smith D.R."/>
            <person name="Doucette-Stamm L.A."/>
            <person name="Deloughery C."/>
            <person name="Lee H.-M."/>
            <person name="Dubois J."/>
            <person name="Aldredge T."/>
            <person name="Bashirzadeh R."/>
            <person name="Blakely D."/>
            <person name="Cook R."/>
            <person name="Gilbert K."/>
            <person name="Harrison D."/>
            <person name="Hoang L."/>
            <person name="Keagle P."/>
            <person name="Lumm W."/>
            <person name="Pothier B."/>
            <person name="Qiu D."/>
            <person name="Spadafora R."/>
            <person name="Vicare R."/>
            <person name="Wang Y."/>
            <person name="Wierzbowski J."/>
            <person name="Gibson R."/>
            <person name="Jiwani N."/>
            <person name="Caruso A."/>
            <person name="Bush D."/>
            <person name="Safer H."/>
            <person name="Patwell D."/>
            <person name="Prabhakar S."/>
            <person name="McDougall S."/>
            <person name="Shimer G."/>
            <person name="Goyal A."/>
            <person name="Pietrovski S."/>
            <person name="Church G.M."/>
            <person name="Daniels C.J."/>
            <person name="Mao J.-I."/>
            <person name="Rice P."/>
            <person name="Noelling J."/>
            <person name="Reeve J.N."/>
        </authorList>
    </citation>
    <scope>NUCLEOTIDE SEQUENCE [LARGE SCALE GENOMIC DNA]</scope>
    <source>
        <strain>ATCC 29096 / DSM 1053 / JCM 10044 / NBRC 100330 / Delta H</strain>
    </source>
</reference>
<dbReference type="EC" id="2.1.1.-" evidence="2"/>
<dbReference type="EMBL" id="AE000666">
    <property type="protein sequence ID" value="AAB85277.1"/>
    <property type="status" value="ALT_INIT"/>
    <property type="molecule type" value="Genomic_DNA"/>
</dbReference>
<dbReference type="PIR" id="E69203">
    <property type="entry name" value="E69203"/>
</dbReference>
<dbReference type="RefSeq" id="WP_048061245.1">
    <property type="nucleotide sequence ID" value="NC_000916.1"/>
</dbReference>
<dbReference type="SMR" id="O26868"/>
<dbReference type="FunCoup" id="O26868">
    <property type="interactions" value="22"/>
</dbReference>
<dbReference type="STRING" id="187420.MTH_774"/>
<dbReference type="PaxDb" id="187420-MTH_774"/>
<dbReference type="EnsemblBacteria" id="AAB85277">
    <property type="protein sequence ID" value="AAB85277"/>
    <property type="gene ID" value="MTH_774"/>
</dbReference>
<dbReference type="KEGG" id="mth:MTH_774"/>
<dbReference type="PATRIC" id="fig|187420.15.peg.762"/>
<dbReference type="HOGENOM" id="CLU_084975_0_0_2"/>
<dbReference type="InParanoid" id="O26868"/>
<dbReference type="UniPathway" id="UPA00575"/>
<dbReference type="Proteomes" id="UP000005223">
    <property type="component" value="Chromosome"/>
</dbReference>
<dbReference type="GO" id="GO:0005829">
    <property type="term" value="C:cytosol"/>
    <property type="evidence" value="ECO:0007669"/>
    <property type="project" value="TreeGrafter"/>
</dbReference>
<dbReference type="GO" id="GO:0004799">
    <property type="term" value="F:thymidylate synthase activity"/>
    <property type="evidence" value="ECO:0007669"/>
    <property type="project" value="UniProtKB-UniRule"/>
</dbReference>
<dbReference type="GO" id="GO:0006231">
    <property type="term" value="P:dTMP biosynthetic process"/>
    <property type="evidence" value="ECO:0007669"/>
    <property type="project" value="UniProtKB-UniRule"/>
</dbReference>
<dbReference type="GO" id="GO:0006235">
    <property type="term" value="P:dTTP biosynthetic process"/>
    <property type="evidence" value="ECO:0007669"/>
    <property type="project" value="UniProtKB-UniRule"/>
</dbReference>
<dbReference type="GO" id="GO:0032259">
    <property type="term" value="P:methylation"/>
    <property type="evidence" value="ECO:0007669"/>
    <property type="project" value="UniProtKB-KW"/>
</dbReference>
<dbReference type="CDD" id="cd00351">
    <property type="entry name" value="TS_Pyrimidine_HMase"/>
    <property type="match status" value="1"/>
</dbReference>
<dbReference type="Gene3D" id="3.30.572.10">
    <property type="entry name" value="Thymidylate synthase/dCMP hydroxymethylase domain"/>
    <property type="match status" value="1"/>
</dbReference>
<dbReference type="HAMAP" id="MF_01686">
    <property type="entry name" value="Thymidy_synth_arch"/>
    <property type="match status" value="1"/>
</dbReference>
<dbReference type="InterPro" id="IPR045097">
    <property type="entry name" value="Thymidate_synth/dCMP_Mease"/>
</dbReference>
<dbReference type="InterPro" id="IPR023451">
    <property type="entry name" value="Thymidate_synth/dCMP_Mease_dom"/>
</dbReference>
<dbReference type="InterPro" id="IPR036926">
    <property type="entry name" value="Thymidate_synth/dCMP_Mease_sf"/>
</dbReference>
<dbReference type="InterPro" id="IPR014620">
    <property type="entry name" value="Thymidylate_synthase_arc"/>
</dbReference>
<dbReference type="NCBIfam" id="TIGR03283">
    <property type="entry name" value="thy_syn_methano"/>
    <property type="match status" value="1"/>
</dbReference>
<dbReference type="PANTHER" id="PTHR11548">
    <property type="entry name" value="THYMIDYLATE SYNTHASE 1"/>
    <property type="match status" value="1"/>
</dbReference>
<dbReference type="PANTHER" id="PTHR11548:SF1">
    <property type="entry name" value="THYMIDYLATE SYNTHASE 1"/>
    <property type="match status" value="1"/>
</dbReference>
<dbReference type="Pfam" id="PF00303">
    <property type="entry name" value="Thymidylat_synt"/>
    <property type="match status" value="1"/>
</dbReference>
<dbReference type="PIRSF" id="PIRSF036752">
    <property type="entry name" value="TSase_MJ051"/>
    <property type="match status" value="1"/>
</dbReference>
<dbReference type="SUPFAM" id="SSF55831">
    <property type="entry name" value="Thymidylate synthase/dCMP hydroxymethylase"/>
    <property type="match status" value="1"/>
</dbReference>
<keyword id="KW-0963">Cytoplasm</keyword>
<keyword id="KW-0489">Methyltransferase</keyword>
<keyword id="KW-0545">Nucleotide biosynthesis</keyword>
<keyword id="KW-1185">Reference proteome</keyword>
<keyword id="KW-0808">Transferase</keyword>
<organism>
    <name type="scientific">Methanothermobacter thermautotrophicus (strain ATCC 29096 / DSM 1053 / JCM 10044 / NBRC 100330 / Delta H)</name>
    <name type="common">Methanobacterium thermoautotrophicum</name>
    <dbReference type="NCBI Taxonomy" id="187420"/>
    <lineage>
        <taxon>Archaea</taxon>
        <taxon>Methanobacteriati</taxon>
        <taxon>Methanobacteriota</taxon>
        <taxon>Methanomada group</taxon>
        <taxon>Methanobacteria</taxon>
        <taxon>Methanobacteriales</taxon>
        <taxon>Methanobacteriaceae</taxon>
        <taxon>Methanothermobacter</taxon>
    </lineage>
</organism>
<name>TYSY_METTH</name>
<proteinExistence type="inferred from homology"/>
<sequence length="222" mass="25556">MAYSIEVNEIADGWKKLVEKIMHDGREIRDERGSLTREVMNTVVTIKKPLGKSDDFYHIRRGSLLNIKVPEGYFWSGEKLEKYSEQFLSGDRKGFVYTYGNRLRAHFGVDQLDEAIRRLKNCTESRRATMVTWDPPEDTASDEVPCMILVDFKIRDGRLFTTALWRSHDIYGAWFPNAVGLAYLADHVAAEVGVEVGHITIHSISAHIYEVNFKEAEEVIKW</sequence>
<comment type="function">
    <text evidence="2">May catalyze the biosynthesis of dTMP using an unknown cosubstrate.</text>
</comment>
<comment type="pathway">
    <text evidence="2">Pyrimidine metabolism; dTTP biosynthesis.</text>
</comment>
<comment type="subunit">
    <text evidence="2">Monomer.</text>
</comment>
<comment type="subcellular location">
    <subcellularLocation>
        <location evidence="2">Cytoplasm</location>
    </subcellularLocation>
</comment>
<comment type="similarity">
    <text evidence="2">Belongs to the thymidylate synthase family. Archaeal-type ThyA subfamily.</text>
</comment>
<comment type="sequence caution" evidence="3">
    <conflict type="erroneous initiation">
        <sequence resource="EMBL-CDS" id="AAB85277"/>
    </conflict>
</comment>
<accession>O26868</accession>